<organism>
    <name type="scientific">Schizosaccharomyces pombe (strain 972 / ATCC 24843)</name>
    <name type="common">Fission yeast</name>
    <dbReference type="NCBI Taxonomy" id="284812"/>
    <lineage>
        <taxon>Eukaryota</taxon>
        <taxon>Fungi</taxon>
        <taxon>Dikarya</taxon>
        <taxon>Ascomycota</taxon>
        <taxon>Taphrinomycotina</taxon>
        <taxon>Schizosaccharomycetes</taxon>
        <taxon>Schizosaccharomycetales</taxon>
        <taxon>Schizosaccharomycetaceae</taxon>
        <taxon>Schizosaccharomyces</taxon>
    </lineage>
</organism>
<comment type="subcellular location">
    <subcellularLocation>
        <location evidence="1">Cytoplasm</location>
    </subcellularLocation>
    <subcellularLocation>
        <location evidence="1">Nucleus</location>
    </subcellularLocation>
</comment>
<comment type="similarity">
    <text evidence="2">Belongs to the SRR1 family.</text>
</comment>
<reference key="1">
    <citation type="journal article" date="2002" name="Nature">
        <title>The genome sequence of Schizosaccharomyces pombe.</title>
        <authorList>
            <person name="Wood V."/>
            <person name="Gwilliam R."/>
            <person name="Rajandream M.A."/>
            <person name="Lyne M.H."/>
            <person name="Lyne R."/>
            <person name="Stewart A."/>
            <person name="Sgouros J.G."/>
            <person name="Peat N."/>
            <person name="Hayles J."/>
            <person name="Baker S.G."/>
            <person name="Basham D."/>
            <person name="Bowman S."/>
            <person name="Brooks K."/>
            <person name="Brown D."/>
            <person name="Brown S."/>
            <person name="Chillingworth T."/>
            <person name="Churcher C.M."/>
            <person name="Collins M."/>
            <person name="Connor R."/>
            <person name="Cronin A."/>
            <person name="Davis P."/>
            <person name="Feltwell T."/>
            <person name="Fraser A."/>
            <person name="Gentles S."/>
            <person name="Goble A."/>
            <person name="Hamlin N."/>
            <person name="Harris D.E."/>
            <person name="Hidalgo J."/>
            <person name="Hodgson G."/>
            <person name="Holroyd S."/>
            <person name="Hornsby T."/>
            <person name="Howarth S."/>
            <person name="Huckle E.J."/>
            <person name="Hunt S."/>
            <person name="Jagels K."/>
            <person name="James K.D."/>
            <person name="Jones L."/>
            <person name="Jones M."/>
            <person name="Leather S."/>
            <person name="McDonald S."/>
            <person name="McLean J."/>
            <person name="Mooney P."/>
            <person name="Moule S."/>
            <person name="Mungall K.L."/>
            <person name="Murphy L.D."/>
            <person name="Niblett D."/>
            <person name="Odell C."/>
            <person name="Oliver K."/>
            <person name="O'Neil S."/>
            <person name="Pearson D."/>
            <person name="Quail M.A."/>
            <person name="Rabbinowitsch E."/>
            <person name="Rutherford K.M."/>
            <person name="Rutter S."/>
            <person name="Saunders D."/>
            <person name="Seeger K."/>
            <person name="Sharp S."/>
            <person name="Skelton J."/>
            <person name="Simmonds M.N."/>
            <person name="Squares R."/>
            <person name="Squares S."/>
            <person name="Stevens K."/>
            <person name="Taylor K."/>
            <person name="Taylor R.G."/>
            <person name="Tivey A."/>
            <person name="Walsh S.V."/>
            <person name="Warren T."/>
            <person name="Whitehead S."/>
            <person name="Woodward J.R."/>
            <person name="Volckaert G."/>
            <person name="Aert R."/>
            <person name="Robben J."/>
            <person name="Grymonprez B."/>
            <person name="Weltjens I."/>
            <person name="Vanstreels E."/>
            <person name="Rieger M."/>
            <person name="Schaefer M."/>
            <person name="Mueller-Auer S."/>
            <person name="Gabel C."/>
            <person name="Fuchs M."/>
            <person name="Duesterhoeft A."/>
            <person name="Fritzc C."/>
            <person name="Holzer E."/>
            <person name="Moestl D."/>
            <person name="Hilbert H."/>
            <person name="Borzym K."/>
            <person name="Langer I."/>
            <person name="Beck A."/>
            <person name="Lehrach H."/>
            <person name="Reinhardt R."/>
            <person name="Pohl T.M."/>
            <person name="Eger P."/>
            <person name="Zimmermann W."/>
            <person name="Wedler H."/>
            <person name="Wambutt R."/>
            <person name="Purnelle B."/>
            <person name="Goffeau A."/>
            <person name="Cadieu E."/>
            <person name="Dreano S."/>
            <person name="Gloux S."/>
            <person name="Lelaure V."/>
            <person name="Mottier S."/>
            <person name="Galibert F."/>
            <person name="Aves S.J."/>
            <person name="Xiang Z."/>
            <person name="Hunt C."/>
            <person name="Moore K."/>
            <person name="Hurst S.M."/>
            <person name="Lucas M."/>
            <person name="Rochet M."/>
            <person name="Gaillardin C."/>
            <person name="Tallada V.A."/>
            <person name="Garzon A."/>
            <person name="Thode G."/>
            <person name="Daga R.R."/>
            <person name="Cruzado L."/>
            <person name="Jimenez J."/>
            <person name="Sanchez M."/>
            <person name="del Rey F."/>
            <person name="Benito J."/>
            <person name="Dominguez A."/>
            <person name="Revuelta J.L."/>
            <person name="Moreno S."/>
            <person name="Armstrong J."/>
            <person name="Forsburg S.L."/>
            <person name="Cerutti L."/>
            <person name="Lowe T."/>
            <person name="McCombie W.R."/>
            <person name="Paulsen I."/>
            <person name="Potashkin J."/>
            <person name="Shpakovski G.V."/>
            <person name="Ussery D."/>
            <person name="Barrell B.G."/>
            <person name="Nurse P."/>
        </authorList>
    </citation>
    <scope>NUCLEOTIDE SEQUENCE [LARGE SCALE GENOMIC DNA]</scope>
    <source>
        <strain>972 / ATCC 24843</strain>
    </source>
</reference>
<reference key="2">
    <citation type="journal article" date="2006" name="Nat. Biotechnol.">
        <title>ORFeome cloning and global analysis of protein localization in the fission yeast Schizosaccharomyces pombe.</title>
        <authorList>
            <person name="Matsuyama A."/>
            <person name="Arai R."/>
            <person name="Yashiroda Y."/>
            <person name="Shirai A."/>
            <person name="Kamata A."/>
            <person name="Sekido S."/>
            <person name="Kobayashi Y."/>
            <person name="Hashimoto A."/>
            <person name="Hamamoto M."/>
            <person name="Hiraoka Y."/>
            <person name="Horinouchi S."/>
            <person name="Yoshida M."/>
        </authorList>
    </citation>
    <scope>SUBCELLULAR LOCATION [LARGE SCALE ANALYSIS]</scope>
</reference>
<sequence length="251" mass="29235">MDFIVVKRSRKKKNGRGKFPKVSNTITQGDTDLWSQDTLQRKLDNSREKLEYSEFLKSVQSQLSEFKDPIHKCIILGLGRIHTLTASLQLSLFFEIMKIFNLQPRFCSFYDPAFLKDDVEFLENKGFCVLPDPPTPSCLKYTLLYMPHCPTSLYETWLAAYVNDDPRHFIMCGNNLQLYVDNKPSKEIVSTYPNVYKMCTKNYYTRLLFPEFPNVYAFNDLSFHFHDAQSFVEKKQPSKFVDASSVAEHPS</sequence>
<proteinExistence type="inferred from homology"/>
<gene>
    <name type="ORF">SPBC14C8.13</name>
</gene>
<protein>
    <recommendedName>
        <fullName>SRR1-like protein</fullName>
    </recommendedName>
</protein>
<evidence type="ECO:0000269" key="1">
    <source>
    </source>
</evidence>
<evidence type="ECO:0000305" key="2"/>
<dbReference type="EMBL" id="CU329671">
    <property type="protein sequence ID" value="CAA18431.1"/>
    <property type="molecule type" value="Genomic_DNA"/>
</dbReference>
<dbReference type="PIR" id="T39441">
    <property type="entry name" value="T39441"/>
</dbReference>
<dbReference type="FunCoup" id="O60093">
    <property type="interactions" value="194"/>
</dbReference>
<dbReference type="iPTMnet" id="O60093"/>
<dbReference type="SwissPalm" id="O60093"/>
<dbReference type="PaxDb" id="4896-SPBC14C8.13.1"/>
<dbReference type="EnsemblFungi" id="SPBC14C8.13.1">
    <property type="protein sequence ID" value="SPBC14C8.13.1:pep"/>
    <property type="gene ID" value="SPBC14C8.13"/>
</dbReference>
<dbReference type="KEGG" id="spo:2540090"/>
<dbReference type="PomBase" id="SPBC14C8.13"/>
<dbReference type="VEuPathDB" id="FungiDB:SPBC14C8.13"/>
<dbReference type="eggNOG" id="KOG3131">
    <property type="taxonomic scope" value="Eukaryota"/>
</dbReference>
<dbReference type="HOGENOM" id="CLU_1134129_0_0_1"/>
<dbReference type="InParanoid" id="O60093"/>
<dbReference type="OMA" id="MPHCPTS"/>
<dbReference type="PhylomeDB" id="O60093"/>
<dbReference type="PRO" id="PR:O60093"/>
<dbReference type="Proteomes" id="UP000002485">
    <property type="component" value="Chromosome II"/>
</dbReference>
<dbReference type="GO" id="GO:0005737">
    <property type="term" value="C:cytoplasm"/>
    <property type="evidence" value="ECO:0000318"/>
    <property type="project" value="GO_Central"/>
</dbReference>
<dbReference type="GO" id="GO:0005829">
    <property type="term" value="C:cytosol"/>
    <property type="evidence" value="ECO:0007005"/>
    <property type="project" value="PomBase"/>
</dbReference>
<dbReference type="GO" id="GO:0005634">
    <property type="term" value="C:nucleus"/>
    <property type="evidence" value="ECO:0007005"/>
    <property type="project" value="PomBase"/>
</dbReference>
<dbReference type="GO" id="GO:0006974">
    <property type="term" value="P:DNA damage response"/>
    <property type="evidence" value="ECO:0000315"/>
    <property type="project" value="PomBase"/>
</dbReference>
<dbReference type="InterPro" id="IPR012942">
    <property type="entry name" value="SRR1-like"/>
</dbReference>
<dbReference type="InterPro" id="IPR040044">
    <property type="entry name" value="SRR1L"/>
</dbReference>
<dbReference type="PANTHER" id="PTHR28626">
    <property type="entry name" value="SRR1-LIKE PROTEIN"/>
    <property type="match status" value="1"/>
</dbReference>
<dbReference type="PANTHER" id="PTHR28626:SF3">
    <property type="entry name" value="SRR1-LIKE PROTEIN"/>
    <property type="match status" value="1"/>
</dbReference>
<dbReference type="Pfam" id="PF07985">
    <property type="entry name" value="SRR1"/>
    <property type="match status" value="1"/>
</dbReference>
<name>SRR1L_SCHPO</name>
<keyword id="KW-0963">Cytoplasm</keyword>
<keyword id="KW-0539">Nucleus</keyword>
<keyword id="KW-1185">Reference proteome</keyword>
<feature type="chain" id="PRO_0000186126" description="SRR1-like protein">
    <location>
        <begin position="1"/>
        <end position="251"/>
    </location>
</feature>
<accession>O60093</accession>